<gene>
    <name evidence="1" type="primary">lexA</name>
    <name type="ordered locus">ESA_00089</name>
</gene>
<dbReference type="EC" id="3.4.21.88" evidence="1"/>
<dbReference type="EMBL" id="CP000783">
    <property type="protein sequence ID" value="ABU75394.1"/>
    <property type="molecule type" value="Genomic_DNA"/>
</dbReference>
<dbReference type="RefSeq" id="WP_007888886.1">
    <property type="nucleotide sequence ID" value="NC_009778.1"/>
</dbReference>
<dbReference type="SMR" id="A7MPP3"/>
<dbReference type="MEROPS" id="S24.001"/>
<dbReference type="GeneID" id="56733082"/>
<dbReference type="KEGG" id="esa:ESA_00089"/>
<dbReference type="HOGENOM" id="CLU_066192_45_3_6"/>
<dbReference type="Proteomes" id="UP000000260">
    <property type="component" value="Chromosome"/>
</dbReference>
<dbReference type="GO" id="GO:0003677">
    <property type="term" value="F:DNA binding"/>
    <property type="evidence" value="ECO:0007669"/>
    <property type="project" value="UniProtKB-UniRule"/>
</dbReference>
<dbReference type="GO" id="GO:0004252">
    <property type="term" value="F:serine-type endopeptidase activity"/>
    <property type="evidence" value="ECO:0007669"/>
    <property type="project" value="UniProtKB-UniRule"/>
</dbReference>
<dbReference type="GO" id="GO:0006281">
    <property type="term" value="P:DNA repair"/>
    <property type="evidence" value="ECO:0007669"/>
    <property type="project" value="UniProtKB-UniRule"/>
</dbReference>
<dbReference type="GO" id="GO:0006260">
    <property type="term" value="P:DNA replication"/>
    <property type="evidence" value="ECO:0007669"/>
    <property type="project" value="UniProtKB-UniRule"/>
</dbReference>
<dbReference type="GO" id="GO:0045892">
    <property type="term" value="P:negative regulation of DNA-templated transcription"/>
    <property type="evidence" value="ECO:0007669"/>
    <property type="project" value="UniProtKB-UniRule"/>
</dbReference>
<dbReference type="GO" id="GO:0006508">
    <property type="term" value="P:proteolysis"/>
    <property type="evidence" value="ECO:0007669"/>
    <property type="project" value="InterPro"/>
</dbReference>
<dbReference type="GO" id="GO:0009432">
    <property type="term" value="P:SOS response"/>
    <property type="evidence" value="ECO:0007669"/>
    <property type="project" value="UniProtKB-UniRule"/>
</dbReference>
<dbReference type="CDD" id="cd06529">
    <property type="entry name" value="S24_LexA-like"/>
    <property type="match status" value="1"/>
</dbReference>
<dbReference type="FunFam" id="1.10.10.10:FF:000009">
    <property type="entry name" value="LexA repressor"/>
    <property type="match status" value="1"/>
</dbReference>
<dbReference type="FunFam" id="2.10.109.10:FF:000001">
    <property type="entry name" value="LexA repressor"/>
    <property type="match status" value="1"/>
</dbReference>
<dbReference type="Gene3D" id="2.10.109.10">
    <property type="entry name" value="Umud Fragment, subunit A"/>
    <property type="match status" value="1"/>
</dbReference>
<dbReference type="Gene3D" id="1.10.10.10">
    <property type="entry name" value="Winged helix-like DNA-binding domain superfamily/Winged helix DNA-binding domain"/>
    <property type="match status" value="1"/>
</dbReference>
<dbReference type="HAMAP" id="MF_00015">
    <property type="entry name" value="LexA"/>
    <property type="match status" value="1"/>
</dbReference>
<dbReference type="InterPro" id="IPR006200">
    <property type="entry name" value="LexA"/>
</dbReference>
<dbReference type="InterPro" id="IPR039418">
    <property type="entry name" value="LexA-like"/>
</dbReference>
<dbReference type="InterPro" id="IPR036286">
    <property type="entry name" value="LexA/Signal_pep-like_sf"/>
</dbReference>
<dbReference type="InterPro" id="IPR006199">
    <property type="entry name" value="LexA_DNA-bd_dom"/>
</dbReference>
<dbReference type="InterPro" id="IPR050077">
    <property type="entry name" value="LexA_repressor"/>
</dbReference>
<dbReference type="InterPro" id="IPR006197">
    <property type="entry name" value="Peptidase_S24_LexA"/>
</dbReference>
<dbReference type="InterPro" id="IPR015927">
    <property type="entry name" value="Peptidase_S24_S26A/B/C"/>
</dbReference>
<dbReference type="InterPro" id="IPR036388">
    <property type="entry name" value="WH-like_DNA-bd_sf"/>
</dbReference>
<dbReference type="InterPro" id="IPR036390">
    <property type="entry name" value="WH_DNA-bd_sf"/>
</dbReference>
<dbReference type="NCBIfam" id="TIGR00498">
    <property type="entry name" value="lexA"/>
    <property type="match status" value="1"/>
</dbReference>
<dbReference type="PANTHER" id="PTHR33516">
    <property type="entry name" value="LEXA REPRESSOR"/>
    <property type="match status" value="1"/>
</dbReference>
<dbReference type="PANTHER" id="PTHR33516:SF2">
    <property type="entry name" value="LEXA REPRESSOR-RELATED"/>
    <property type="match status" value="1"/>
</dbReference>
<dbReference type="Pfam" id="PF01726">
    <property type="entry name" value="LexA_DNA_bind"/>
    <property type="match status" value="1"/>
</dbReference>
<dbReference type="Pfam" id="PF00717">
    <property type="entry name" value="Peptidase_S24"/>
    <property type="match status" value="1"/>
</dbReference>
<dbReference type="PRINTS" id="PR00726">
    <property type="entry name" value="LEXASERPTASE"/>
</dbReference>
<dbReference type="SUPFAM" id="SSF51306">
    <property type="entry name" value="LexA/Signal peptidase"/>
    <property type="match status" value="1"/>
</dbReference>
<dbReference type="SUPFAM" id="SSF46785">
    <property type="entry name" value="Winged helix' DNA-binding domain"/>
    <property type="match status" value="1"/>
</dbReference>
<evidence type="ECO:0000255" key="1">
    <source>
        <dbReference type="HAMAP-Rule" id="MF_00015"/>
    </source>
</evidence>
<protein>
    <recommendedName>
        <fullName evidence="1">LexA repressor</fullName>
        <ecNumber evidence="1">3.4.21.88</ecNumber>
    </recommendedName>
</protein>
<sequence>MKALTTRQQEVFDLIRDHISQTGMPPTRAEIAQRLGFRSPNAAEEHLKALARKGVIEIVSGASRGIRLLQEEENGLPLIGRVAAGEPLLAQQHIEGHYQVDPGLFKPNADFLLRVSGMSMKDIGIMDGDLLAVHKTQDVRNGQVVVARIDDEVTVKRLKKQGNTVELLPENSEFKPIVVDLREHNFSIEGLAVGVIRNGEWL</sequence>
<proteinExistence type="inferred from homology"/>
<feature type="chain" id="PRO_1000001284" description="LexA repressor">
    <location>
        <begin position="1"/>
        <end position="202"/>
    </location>
</feature>
<feature type="DNA-binding region" description="H-T-H motif" evidence="1">
    <location>
        <begin position="28"/>
        <end position="48"/>
    </location>
</feature>
<feature type="active site" description="For autocatalytic cleavage activity" evidence="1">
    <location>
        <position position="119"/>
    </location>
</feature>
<feature type="active site" description="For autocatalytic cleavage activity" evidence="1">
    <location>
        <position position="156"/>
    </location>
</feature>
<feature type="site" description="Cleavage; by autolysis" evidence="1">
    <location>
        <begin position="84"/>
        <end position="85"/>
    </location>
</feature>
<keyword id="KW-0068">Autocatalytic cleavage</keyword>
<keyword id="KW-0227">DNA damage</keyword>
<keyword id="KW-0234">DNA repair</keyword>
<keyword id="KW-0235">DNA replication</keyword>
<keyword id="KW-0238">DNA-binding</keyword>
<keyword id="KW-0378">Hydrolase</keyword>
<keyword id="KW-1185">Reference proteome</keyword>
<keyword id="KW-0678">Repressor</keyword>
<keyword id="KW-0742">SOS response</keyword>
<keyword id="KW-0804">Transcription</keyword>
<keyword id="KW-0805">Transcription regulation</keyword>
<comment type="function">
    <text evidence="1">Represses a number of genes involved in the response to DNA damage (SOS response), including recA and lexA. Binds to the 16 bp palindromic sequence 5'-CTGTATATATATACAG-3'. In the presence of single-stranded DNA, RecA interacts with LexA causing an autocatalytic cleavage which disrupts the DNA-binding part of LexA, leading to derepression of the SOS regulon and eventually DNA repair.</text>
</comment>
<comment type="catalytic activity">
    <reaction evidence="1">
        <text>Hydrolysis of Ala-|-Gly bond in repressor LexA.</text>
        <dbReference type="EC" id="3.4.21.88"/>
    </reaction>
</comment>
<comment type="subunit">
    <text evidence="1">Homodimer.</text>
</comment>
<comment type="similarity">
    <text evidence="1">Belongs to the peptidase S24 family.</text>
</comment>
<name>LEXA_CROS8</name>
<organism>
    <name type="scientific">Cronobacter sakazakii (strain ATCC BAA-894)</name>
    <name type="common">Enterobacter sakazakii</name>
    <dbReference type="NCBI Taxonomy" id="290339"/>
    <lineage>
        <taxon>Bacteria</taxon>
        <taxon>Pseudomonadati</taxon>
        <taxon>Pseudomonadota</taxon>
        <taxon>Gammaproteobacteria</taxon>
        <taxon>Enterobacterales</taxon>
        <taxon>Enterobacteriaceae</taxon>
        <taxon>Cronobacter</taxon>
    </lineage>
</organism>
<reference key="1">
    <citation type="journal article" date="2010" name="PLoS ONE">
        <title>Genome sequence of Cronobacter sakazakii BAA-894 and comparative genomic hybridization analysis with other Cronobacter species.</title>
        <authorList>
            <person name="Kucerova E."/>
            <person name="Clifton S.W."/>
            <person name="Xia X.Q."/>
            <person name="Long F."/>
            <person name="Porwollik S."/>
            <person name="Fulton L."/>
            <person name="Fronick C."/>
            <person name="Minx P."/>
            <person name="Kyung K."/>
            <person name="Warren W."/>
            <person name="Fulton R."/>
            <person name="Feng D."/>
            <person name="Wollam A."/>
            <person name="Shah N."/>
            <person name="Bhonagiri V."/>
            <person name="Nash W.E."/>
            <person name="Hallsworth-Pepin K."/>
            <person name="Wilson R.K."/>
            <person name="McClelland M."/>
            <person name="Forsythe S.J."/>
        </authorList>
    </citation>
    <scope>NUCLEOTIDE SEQUENCE [LARGE SCALE GENOMIC DNA]</scope>
    <source>
        <strain>ATCC BAA-894</strain>
    </source>
</reference>
<accession>A7MPP3</accession>